<dbReference type="EC" id="4.6.1.-" evidence="4"/>
<dbReference type="EMBL" id="FJ171480">
    <property type="protein sequence ID" value="ACN48976.1"/>
    <property type="molecule type" value="mRNA"/>
</dbReference>
<dbReference type="SMR" id="C0JB45"/>
<dbReference type="GO" id="GO:0005576">
    <property type="term" value="C:extracellular region"/>
    <property type="evidence" value="ECO:0007669"/>
    <property type="project" value="UniProtKB-SubCell"/>
</dbReference>
<dbReference type="GO" id="GO:0016829">
    <property type="term" value="F:lyase activity"/>
    <property type="evidence" value="ECO:0007669"/>
    <property type="project" value="UniProtKB-KW"/>
</dbReference>
<dbReference type="GO" id="GO:0046872">
    <property type="term" value="F:metal ion binding"/>
    <property type="evidence" value="ECO:0007669"/>
    <property type="project" value="UniProtKB-KW"/>
</dbReference>
<dbReference type="GO" id="GO:0008081">
    <property type="term" value="F:phosphoric diester hydrolase activity"/>
    <property type="evidence" value="ECO:0007669"/>
    <property type="project" value="InterPro"/>
</dbReference>
<dbReference type="GO" id="GO:0090729">
    <property type="term" value="F:toxin activity"/>
    <property type="evidence" value="ECO:0007669"/>
    <property type="project" value="UniProtKB-KW"/>
</dbReference>
<dbReference type="GO" id="GO:0031640">
    <property type="term" value="P:killing of cells of another organism"/>
    <property type="evidence" value="ECO:0007669"/>
    <property type="project" value="UniProtKB-KW"/>
</dbReference>
<dbReference type="GO" id="GO:0016042">
    <property type="term" value="P:lipid catabolic process"/>
    <property type="evidence" value="ECO:0007669"/>
    <property type="project" value="UniProtKB-KW"/>
</dbReference>
<dbReference type="CDD" id="cd08576">
    <property type="entry name" value="GDPD_like_SMaseD_PLD"/>
    <property type="match status" value="1"/>
</dbReference>
<dbReference type="Gene3D" id="3.20.20.190">
    <property type="entry name" value="Phosphatidylinositol (PI) phosphodiesterase"/>
    <property type="match status" value="1"/>
</dbReference>
<dbReference type="InterPro" id="IPR017946">
    <property type="entry name" value="PLC-like_Pdiesterase_TIM-brl"/>
</dbReference>
<dbReference type="SUPFAM" id="SSF51695">
    <property type="entry name" value="PLC-like phosphodiesterases"/>
    <property type="match status" value="1"/>
</dbReference>
<protein>
    <recommendedName>
        <fullName evidence="6">Dermonecrotic toxin LspiSicTox-betaIE3ii</fullName>
        <ecNumber evidence="4">4.6.1.-</ecNumber>
    </recommendedName>
    <alternativeName>
        <fullName>Phospholipase D</fullName>
        <shortName>PLD</shortName>
    </alternativeName>
    <alternativeName>
        <fullName>Sphingomyelin phosphodiesterase D</fullName>
        <shortName>SMD</shortName>
        <shortName>SMase D</shortName>
        <shortName>Sphingomyelinase D</shortName>
    </alternativeName>
</protein>
<organism>
    <name type="scientific">Loxosceles spinulosa</name>
    <name type="common">Recluse spider</name>
    <dbReference type="NCBI Taxonomy" id="571532"/>
    <lineage>
        <taxon>Eukaryota</taxon>
        <taxon>Metazoa</taxon>
        <taxon>Ecdysozoa</taxon>
        <taxon>Arthropoda</taxon>
        <taxon>Chelicerata</taxon>
        <taxon>Arachnida</taxon>
        <taxon>Araneae</taxon>
        <taxon>Araneomorphae</taxon>
        <taxon>Haplogynae</taxon>
        <taxon>Scytodoidea</taxon>
        <taxon>Sicariidae</taxon>
        <taxon>Loxosceles</taxon>
    </lineage>
</organism>
<keyword id="KW-0204">Cytolysis</keyword>
<keyword id="KW-1061">Dermonecrotic toxin</keyword>
<keyword id="KW-1015">Disulfide bond</keyword>
<keyword id="KW-0354">Hemolysis</keyword>
<keyword id="KW-0442">Lipid degradation</keyword>
<keyword id="KW-0443">Lipid metabolism</keyword>
<keyword id="KW-0456">Lyase</keyword>
<keyword id="KW-0460">Magnesium</keyword>
<keyword id="KW-0479">Metal-binding</keyword>
<keyword id="KW-0964">Secreted</keyword>
<keyword id="KW-0800">Toxin</keyword>
<accession>C0JB45</accession>
<name>B1T2_LOXSN</name>
<sequence length="279" mass="31735">FALAHMVNDFDILKSYLDEGANGVETDITFSDEGEPEYAFHGVPCDCKRWCRRTVGFNEYLQHVRDLSTPGNPKFREHFIAIVLDLKLNGLSQEALAHGGMRLADKLIAYYWAHGRNATRITFIVSVPKTSEKVFLKTFLEEIKAVGYDDMLSKVAFDFTDNGDFSETQKVFEGLGIHEHIWASDGITNCIPLLFRGTSRLEDLIRQRDVPGYKYISKVYAWTYDKETSVVKALELGVDGVMTNYADFVIGIINKPEHSSKYRLATYQDNPFEKFVKSA</sequence>
<comment type="function">
    <text evidence="1 3">Dermonecrotic toxins cleave the phosphodiester linkage between the phosphate and headgroup of certain phospholipids (sphingolipid and lysolipid substrates), forming an alcohol (often choline) and a cyclic phosphate (By similarity). This toxin acts on sphingomyelin (SM) (By similarity). It may also act on ceramide phosphoethanolamine (CPE), lysophosphatidylcholine (LPC) and lysophosphatidylethanolamine (LPE), but not on lysophosphatidylserine (LPS), and lysophosphatidylglycerol (LPG) (By similarity). It acts by transphosphatidylation, releasing exclusively cyclic phosphate products as second products (By similarity). Induces dermonecrosis, hemolysis, increased vascular permeability, edema, inflammatory response, and platelet aggregation (By similarity).</text>
</comment>
<comment type="catalytic activity">
    <reaction evidence="1">
        <text>an N-(acyl)-sphingosylphosphocholine = an N-(acyl)-sphingosyl-1,3-cyclic phosphate + choline</text>
        <dbReference type="Rhea" id="RHEA:60652"/>
        <dbReference type="ChEBI" id="CHEBI:15354"/>
        <dbReference type="ChEBI" id="CHEBI:64583"/>
        <dbReference type="ChEBI" id="CHEBI:143892"/>
    </reaction>
</comment>
<comment type="catalytic activity">
    <reaction evidence="1">
        <text>an N-(acyl)-sphingosylphosphoethanolamine = an N-(acyl)-sphingosyl-1,3-cyclic phosphate + ethanolamine</text>
        <dbReference type="Rhea" id="RHEA:60648"/>
        <dbReference type="ChEBI" id="CHEBI:57603"/>
        <dbReference type="ChEBI" id="CHEBI:143891"/>
        <dbReference type="ChEBI" id="CHEBI:143892"/>
    </reaction>
</comment>
<comment type="catalytic activity">
    <reaction evidence="1">
        <text>a 1-acyl-sn-glycero-3-phosphocholine = a 1-acyl-sn-glycero-2,3-cyclic phosphate + choline</text>
        <dbReference type="Rhea" id="RHEA:60700"/>
        <dbReference type="ChEBI" id="CHEBI:15354"/>
        <dbReference type="ChEBI" id="CHEBI:58168"/>
        <dbReference type="ChEBI" id="CHEBI:143947"/>
    </reaction>
</comment>
<comment type="catalytic activity">
    <reaction evidence="1">
        <text>a 1-acyl-sn-glycero-3-phosphoethanolamine = a 1-acyl-sn-glycero-2,3-cyclic phosphate + ethanolamine</text>
        <dbReference type="Rhea" id="RHEA:60704"/>
        <dbReference type="ChEBI" id="CHEBI:57603"/>
        <dbReference type="ChEBI" id="CHEBI:64381"/>
        <dbReference type="ChEBI" id="CHEBI:143947"/>
    </reaction>
</comment>
<comment type="cofactor">
    <cofactor evidence="5">
        <name>Mg(2+)</name>
        <dbReference type="ChEBI" id="CHEBI:18420"/>
    </cofactor>
    <text evidence="5">Binds 1 Mg(2+) ion per subunit.</text>
</comment>
<comment type="subcellular location">
    <subcellularLocation>
        <location evidence="8">Secreted</location>
    </subcellularLocation>
</comment>
<comment type="tissue specificity">
    <text evidence="8">Expressed by the venom gland.</text>
</comment>
<comment type="similarity">
    <text evidence="7">Belongs to the arthropod phospholipase D family. Class II subfamily.</text>
</comment>
<comment type="caution">
    <text evidence="1 2 4">The most common activity assay for dermonecrotic toxins detects enzymatic activity by monitoring choline release from substrate. Liberation of choline from sphingomyelin (SM) or lysophosphatidylcholine (LPC) is commonly assumed to result from substrate hydrolysis, giving either ceramide-1-phosphate (C1P) or lysophosphatidic acid (LPA), respectively, as a second product. However, two studies from Lajoie and colleagues (2013 and 2015) report the observation of exclusive formation of cyclic phosphate products as second products, resulting from intramolecular transphosphatidylation. Cyclic phosphates have vastly different biological properties from their monoester counterparts, and they may be relevant to the pathology of brown spider envenomation.</text>
</comment>
<proteinExistence type="evidence at transcript level"/>
<evidence type="ECO:0000250" key="1">
    <source>
        <dbReference type="UniProtKB" id="A0A0D4WTV1"/>
    </source>
</evidence>
<evidence type="ECO:0000250" key="2">
    <source>
        <dbReference type="UniProtKB" id="A0A0D4WV12"/>
    </source>
</evidence>
<evidence type="ECO:0000250" key="3">
    <source>
        <dbReference type="UniProtKB" id="P0CE80"/>
    </source>
</evidence>
<evidence type="ECO:0000250" key="4">
    <source>
        <dbReference type="UniProtKB" id="Q4ZFU2"/>
    </source>
</evidence>
<evidence type="ECO:0000250" key="5">
    <source>
        <dbReference type="UniProtKB" id="Q8I914"/>
    </source>
</evidence>
<evidence type="ECO:0000303" key="6">
    <source>
    </source>
</evidence>
<evidence type="ECO:0000305" key="7"/>
<evidence type="ECO:0000305" key="8">
    <source>
    </source>
</evidence>
<feature type="chain" id="PRO_0000392864" description="Dermonecrotic toxin LspiSicTox-betaIE3ii">
    <location>
        <begin position="1" status="less than"/>
        <end position="279"/>
    </location>
</feature>
<feature type="active site" evidence="5">
    <location>
        <position position="5"/>
    </location>
</feature>
<feature type="active site" description="Nucleophile" evidence="5">
    <location>
        <position position="41"/>
    </location>
</feature>
<feature type="binding site" evidence="5">
    <location>
        <position position="25"/>
    </location>
    <ligand>
        <name>Mg(2+)</name>
        <dbReference type="ChEBI" id="CHEBI:18420"/>
    </ligand>
</feature>
<feature type="binding site" evidence="5">
    <location>
        <position position="27"/>
    </location>
    <ligand>
        <name>Mg(2+)</name>
        <dbReference type="ChEBI" id="CHEBI:18420"/>
    </ligand>
</feature>
<feature type="binding site" evidence="5">
    <location>
        <position position="85"/>
    </location>
    <ligand>
        <name>Mg(2+)</name>
        <dbReference type="ChEBI" id="CHEBI:18420"/>
    </ligand>
</feature>
<feature type="disulfide bond" evidence="3">
    <location>
        <begin position="45"/>
        <end position="51"/>
    </location>
</feature>
<feature type="disulfide bond" evidence="3">
    <location>
        <begin position="47"/>
        <end position="190"/>
    </location>
</feature>
<feature type="non-terminal residue">
    <location>
        <position position="1"/>
    </location>
</feature>
<reference key="1">
    <citation type="journal article" date="2009" name="Mol. Biol. Evol.">
        <title>Molecular evolution, functional variation, and proposed nomenclature of the gene family that includes sphingomyelinase D in sicariid spider venoms.</title>
        <authorList>
            <person name="Binford G.J."/>
            <person name="Bodner M.R."/>
            <person name="Cordes M.H."/>
            <person name="Baldwin K.L."/>
            <person name="Rynerson M.R."/>
            <person name="Burns S.N."/>
            <person name="Zobel-Thropp P.A."/>
        </authorList>
    </citation>
    <scope>NUCLEOTIDE SEQUENCE [MRNA]</scope>
    <scope>NOMENCLATURE</scope>
    <source>
        <strain>Borakalalo</strain>
        <tissue>Venom gland</tissue>
    </source>
</reference>